<sequence>MNTSITARELFDQQRDKLALRWVAGQKGEHREIQAGSNNARRPSLAGYLNVIYPNKVQILGTEELAWLDSLDARQRWETIEKIIQVQPLALAISKNQSCPEDLGAAADESNTPLWISPKRGHELLNHLSYHLARTLAPRVTLHGVFMEIYSIGVLITGEAGSGKSELALELLSRGHRLVADDAPEFTQIAPDVLDGTCPELLQDLLEVRGLGVLNVRDMFGDTAVKKNKYLRLIVHLTRPMTEPTPSGYERLTGDSGSRHVLDLDVPLITLPVMPGRNLAVLTEAATRLHILRTKGIDPAAMFIARHSNLLERRTP</sequence>
<keyword id="KW-0067">ATP-binding</keyword>
<keyword id="KW-0418">Kinase</keyword>
<keyword id="KW-0460">Magnesium</keyword>
<keyword id="KW-0479">Metal-binding</keyword>
<keyword id="KW-0511">Multifunctional enzyme</keyword>
<keyword id="KW-0547">Nucleotide-binding</keyword>
<keyword id="KW-1185">Reference proteome</keyword>
<keyword id="KW-0723">Serine/threonine-protein kinase</keyword>
<keyword id="KW-0808">Transferase</keyword>
<proteinExistence type="inferred from homology"/>
<protein>
    <recommendedName>
        <fullName evidence="1">HPr kinase/phosphorylase</fullName>
        <shortName evidence="1">HPrK/P</shortName>
        <ecNumber evidence="1">2.7.11.-</ecNumber>
        <ecNumber evidence="1">2.7.4.-</ecNumber>
    </recommendedName>
    <alternativeName>
        <fullName evidence="1">HPr(Ser) kinase/phosphorylase</fullName>
    </alternativeName>
</protein>
<gene>
    <name evidence="1" type="primary">hprK</name>
    <name type="ordered locus">XOO1281</name>
</gene>
<comment type="function">
    <text evidence="1">Catalyzes the ATP- as well as the pyrophosphate-dependent phosphorylation of a specific serine residue in HPr, a phosphocarrier protein of the phosphoenolpyruvate-dependent sugar phosphotransferase system (PTS). HprK/P also catalyzes the pyrophosphate-producing, inorganic phosphate-dependent dephosphorylation (phosphorolysis) of seryl-phosphorylated HPr (P-Ser-HPr).</text>
</comment>
<comment type="catalytic activity">
    <reaction evidence="1">
        <text>[HPr protein]-L-serine + ATP = [HPr protein]-O-phospho-L-serine + ADP + H(+)</text>
        <dbReference type="Rhea" id="RHEA:46600"/>
        <dbReference type="Rhea" id="RHEA-COMP:11602"/>
        <dbReference type="Rhea" id="RHEA-COMP:11603"/>
        <dbReference type="ChEBI" id="CHEBI:15378"/>
        <dbReference type="ChEBI" id="CHEBI:29999"/>
        <dbReference type="ChEBI" id="CHEBI:30616"/>
        <dbReference type="ChEBI" id="CHEBI:83421"/>
        <dbReference type="ChEBI" id="CHEBI:456216"/>
    </reaction>
</comment>
<comment type="catalytic activity">
    <reaction evidence="1">
        <text>[HPr protein]-O-phospho-L-serine + phosphate + H(+) = [HPr protein]-L-serine + diphosphate</text>
        <dbReference type="Rhea" id="RHEA:46604"/>
        <dbReference type="Rhea" id="RHEA-COMP:11602"/>
        <dbReference type="Rhea" id="RHEA-COMP:11603"/>
        <dbReference type="ChEBI" id="CHEBI:15378"/>
        <dbReference type="ChEBI" id="CHEBI:29999"/>
        <dbReference type="ChEBI" id="CHEBI:33019"/>
        <dbReference type="ChEBI" id="CHEBI:43474"/>
        <dbReference type="ChEBI" id="CHEBI:83421"/>
    </reaction>
</comment>
<comment type="cofactor">
    <cofactor evidence="1">
        <name>Mg(2+)</name>
        <dbReference type="ChEBI" id="CHEBI:18420"/>
    </cofactor>
</comment>
<comment type="subunit">
    <text evidence="1">Homohexamer.</text>
</comment>
<comment type="domain">
    <text evidence="1">The Walker A ATP-binding motif also binds Pi and PPi.</text>
</comment>
<comment type="miscellaneous">
    <text evidence="1">Both phosphorylation and phosphorolysis are carried out by the same active site and suggest a common mechanism for both reactions.</text>
</comment>
<comment type="similarity">
    <text evidence="1">Belongs to the HPrK/P family.</text>
</comment>
<dbReference type="EC" id="2.7.11.-" evidence="1"/>
<dbReference type="EC" id="2.7.4.-" evidence="1"/>
<dbReference type="EMBL" id="AE013598">
    <property type="protein sequence ID" value="AAW74535.1"/>
    <property type="molecule type" value="Genomic_DNA"/>
</dbReference>
<dbReference type="SMR" id="Q5H3D6"/>
<dbReference type="STRING" id="291331.XOO1281"/>
<dbReference type="KEGG" id="xoo:XOO1281"/>
<dbReference type="HOGENOM" id="CLU_052030_0_2_6"/>
<dbReference type="Proteomes" id="UP000006735">
    <property type="component" value="Chromosome"/>
</dbReference>
<dbReference type="GO" id="GO:0005524">
    <property type="term" value="F:ATP binding"/>
    <property type="evidence" value="ECO:0007669"/>
    <property type="project" value="UniProtKB-UniRule"/>
</dbReference>
<dbReference type="GO" id="GO:0000287">
    <property type="term" value="F:magnesium ion binding"/>
    <property type="evidence" value="ECO:0007669"/>
    <property type="project" value="UniProtKB-UniRule"/>
</dbReference>
<dbReference type="GO" id="GO:0000155">
    <property type="term" value="F:phosphorelay sensor kinase activity"/>
    <property type="evidence" value="ECO:0007669"/>
    <property type="project" value="InterPro"/>
</dbReference>
<dbReference type="GO" id="GO:0004674">
    <property type="term" value="F:protein serine/threonine kinase activity"/>
    <property type="evidence" value="ECO:0007669"/>
    <property type="project" value="UniProtKB-KW"/>
</dbReference>
<dbReference type="GO" id="GO:0004712">
    <property type="term" value="F:protein serine/threonine/tyrosine kinase activity"/>
    <property type="evidence" value="ECO:0007669"/>
    <property type="project" value="UniProtKB-UniRule"/>
</dbReference>
<dbReference type="GO" id="GO:0006109">
    <property type="term" value="P:regulation of carbohydrate metabolic process"/>
    <property type="evidence" value="ECO:0007669"/>
    <property type="project" value="UniProtKB-UniRule"/>
</dbReference>
<dbReference type="CDD" id="cd01918">
    <property type="entry name" value="HprK_C"/>
    <property type="match status" value="1"/>
</dbReference>
<dbReference type="FunFam" id="3.40.50.300:FF:000174">
    <property type="entry name" value="HPr kinase/phosphorylase"/>
    <property type="match status" value="1"/>
</dbReference>
<dbReference type="Gene3D" id="3.40.1390.20">
    <property type="entry name" value="HprK N-terminal domain-like"/>
    <property type="match status" value="1"/>
</dbReference>
<dbReference type="Gene3D" id="3.40.50.300">
    <property type="entry name" value="P-loop containing nucleotide triphosphate hydrolases"/>
    <property type="match status" value="1"/>
</dbReference>
<dbReference type="HAMAP" id="MF_01249">
    <property type="entry name" value="HPr_kinase"/>
    <property type="match status" value="1"/>
</dbReference>
<dbReference type="InterPro" id="IPR003755">
    <property type="entry name" value="HPr(Ser)_kin/Pase"/>
</dbReference>
<dbReference type="InterPro" id="IPR011104">
    <property type="entry name" value="Hpr_kin/Pase_C"/>
</dbReference>
<dbReference type="InterPro" id="IPR011126">
    <property type="entry name" value="Hpr_kin/Pase_Hpr_N"/>
</dbReference>
<dbReference type="InterPro" id="IPR027417">
    <property type="entry name" value="P-loop_NTPase"/>
</dbReference>
<dbReference type="InterPro" id="IPR028979">
    <property type="entry name" value="Ser_kin/Pase_Hpr-like_N_sf"/>
</dbReference>
<dbReference type="NCBIfam" id="TIGR00679">
    <property type="entry name" value="hpr-ser"/>
    <property type="match status" value="1"/>
</dbReference>
<dbReference type="PANTHER" id="PTHR30305:SF1">
    <property type="entry name" value="HPR KINASE_PHOSPHORYLASE"/>
    <property type="match status" value="1"/>
</dbReference>
<dbReference type="PANTHER" id="PTHR30305">
    <property type="entry name" value="PROTEIN YJDM-RELATED"/>
    <property type="match status" value="1"/>
</dbReference>
<dbReference type="Pfam" id="PF07475">
    <property type="entry name" value="Hpr_kinase_C"/>
    <property type="match status" value="1"/>
</dbReference>
<dbReference type="Pfam" id="PF02603">
    <property type="entry name" value="Hpr_kinase_N"/>
    <property type="match status" value="1"/>
</dbReference>
<dbReference type="SUPFAM" id="SSF75138">
    <property type="entry name" value="HprK N-terminal domain-like"/>
    <property type="match status" value="1"/>
</dbReference>
<dbReference type="SUPFAM" id="SSF53795">
    <property type="entry name" value="PEP carboxykinase-like"/>
    <property type="match status" value="1"/>
</dbReference>
<organism>
    <name type="scientific">Xanthomonas oryzae pv. oryzae (strain KACC10331 / KXO85)</name>
    <dbReference type="NCBI Taxonomy" id="291331"/>
    <lineage>
        <taxon>Bacteria</taxon>
        <taxon>Pseudomonadati</taxon>
        <taxon>Pseudomonadota</taxon>
        <taxon>Gammaproteobacteria</taxon>
        <taxon>Lysobacterales</taxon>
        <taxon>Lysobacteraceae</taxon>
        <taxon>Xanthomonas</taxon>
    </lineage>
</organism>
<feature type="chain" id="PRO_1000067185" description="HPr kinase/phosphorylase">
    <location>
        <begin position="1"/>
        <end position="316"/>
    </location>
</feature>
<feature type="region of interest" description="Important for the catalytic mechanism of both phosphorylation and dephosphorylation" evidence="1">
    <location>
        <begin position="206"/>
        <end position="215"/>
    </location>
</feature>
<feature type="region of interest" description="Important for the catalytic mechanism of dephosphorylation" evidence="1">
    <location>
        <begin position="272"/>
        <end position="277"/>
    </location>
</feature>
<feature type="active site" evidence="1">
    <location>
        <position position="143"/>
    </location>
</feature>
<feature type="active site" evidence="1">
    <location>
        <position position="164"/>
    </location>
</feature>
<feature type="active site" description="Proton acceptor; for phosphorylation activity. Proton donor; for dephosphorylation activity" evidence="1">
    <location>
        <position position="182"/>
    </location>
</feature>
<feature type="active site" evidence="1">
    <location>
        <position position="251"/>
    </location>
</feature>
<feature type="binding site" evidence="1">
    <location>
        <begin position="158"/>
        <end position="165"/>
    </location>
    <ligand>
        <name>ATP</name>
        <dbReference type="ChEBI" id="CHEBI:30616"/>
    </ligand>
</feature>
<feature type="binding site" evidence="1">
    <location>
        <position position="165"/>
    </location>
    <ligand>
        <name>Mg(2+)</name>
        <dbReference type="ChEBI" id="CHEBI:18420"/>
    </ligand>
</feature>
<feature type="binding site" evidence="1">
    <location>
        <position position="207"/>
    </location>
    <ligand>
        <name>Mg(2+)</name>
        <dbReference type="ChEBI" id="CHEBI:18420"/>
    </ligand>
</feature>
<name>HPRK_XANOR</name>
<reference key="1">
    <citation type="journal article" date="2005" name="Nucleic Acids Res.">
        <title>The genome sequence of Xanthomonas oryzae pathovar oryzae KACC10331, the bacterial blight pathogen of rice.</title>
        <authorList>
            <person name="Lee B.-M."/>
            <person name="Park Y.-J."/>
            <person name="Park D.-S."/>
            <person name="Kang H.-W."/>
            <person name="Kim J.-G."/>
            <person name="Song E.-S."/>
            <person name="Park I.-C."/>
            <person name="Yoon U.-H."/>
            <person name="Hahn J.-H."/>
            <person name="Koo B.-S."/>
            <person name="Lee G.-B."/>
            <person name="Kim H."/>
            <person name="Park H.-S."/>
            <person name="Yoon K.-O."/>
            <person name="Kim J.-H."/>
            <person name="Jung C.-H."/>
            <person name="Koh N.-H."/>
            <person name="Seo J.-S."/>
            <person name="Go S.-J."/>
        </authorList>
    </citation>
    <scope>NUCLEOTIDE SEQUENCE [LARGE SCALE GENOMIC DNA]</scope>
    <source>
        <strain>KACC10331 / KXO85</strain>
    </source>
</reference>
<evidence type="ECO:0000255" key="1">
    <source>
        <dbReference type="HAMAP-Rule" id="MF_01249"/>
    </source>
</evidence>
<accession>Q5H3D6</accession>